<reference key="1">
    <citation type="journal article" date="2004" name="Genome Res.">
        <title>The status, quality, and expansion of the NIH full-length cDNA project: the Mammalian Gene Collection (MGC).</title>
        <authorList>
            <consortium name="The MGC Project Team"/>
        </authorList>
    </citation>
    <scope>NUCLEOTIDE SEQUENCE [LARGE SCALE MRNA]</scope>
    <source>
        <tissue>Kidney</tissue>
    </source>
</reference>
<comment type="similarity">
    <text evidence="3">Belongs to the HGH1 family.</text>
</comment>
<keyword id="KW-0597">Phosphoprotein</keyword>
<keyword id="KW-1185">Reference proteome</keyword>
<evidence type="ECO:0000250" key="1">
    <source>
        <dbReference type="UniProtKB" id="Q9BTY7"/>
    </source>
</evidence>
<evidence type="ECO:0000256" key="2">
    <source>
        <dbReference type="SAM" id="MobiDB-lite"/>
    </source>
</evidence>
<evidence type="ECO:0000305" key="3"/>
<feature type="chain" id="PRO_0000273320" description="Protein HGH1 homolog">
    <location>
        <begin position="1"/>
        <end position="393"/>
    </location>
</feature>
<feature type="region of interest" description="Disordered" evidence="2">
    <location>
        <begin position="1"/>
        <end position="21"/>
    </location>
</feature>
<feature type="region of interest" description="Disordered" evidence="2">
    <location>
        <begin position="374"/>
        <end position="393"/>
    </location>
</feature>
<feature type="compositionally biased region" description="Gly residues" evidence="2">
    <location>
        <begin position="1"/>
        <end position="12"/>
    </location>
</feature>
<feature type="compositionally biased region" description="Basic and acidic residues" evidence="2">
    <location>
        <begin position="382"/>
        <end position="393"/>
    </location>
</feature>
<feature type="modified residue" description="Phosphoserine" evidence="1">
    <location>
        <position position="221"/>
    </location>
</feature>
<accession>Q6AY79</accession>
<sequence>MRGPGVGSGLSGERGLSGKEAGADTEVAELLPFLVPGARADLQAAAAQHVLALTGVGSGRTLLAGQTALLRALIDLAVAPIPAPSRDASRALVNLAADPDLHWQMLAADPELPVRLLRCVLDPQWPWAEELAAVLANLSREPAPCAVLTEKLVAAEPERLGLERLVSALCMPSYNASAPLHYLGPLLSNLSQQAEVRAFLLDPDRCVVQRLLPLTQYTDSSVRRGGVVGTLRNCCFEHRHHKWLLGPQVDILPFLLLPLAGPEEFSEEEMEELPVDLQYLSPDKQREPDADIRKMLIEAIMLLTATAPGRKQVRDQGAYLILRELYAWESEPDVRMACEKLIQVLIGDEPEVGMENLLEVQVPEDVERQLQELDQQEQQELAQERRDKGAPRT</sequence>
<gene>
    <name type="primary">Hgh1</name>
    <name type="synonym">Brp16</name>
    <name type="synonym">Fam203a</name>
</gene>
<name>HGH1_RAT</name>
<dbReference type="EMBL" id="BC079158">
    <property type="protein sequence ID" value="AAH79158.1"/>
    <property type="molecule type" value="mRNA"/>
</dbReference>
<dbReference type="RefSeq" id="NP_001007708.1">
    <property type="nucleotide sequence ID" value="NM_001007707.1"/>
</dbReference>
<dbReference type="SMR" id="Q6AY79"/>
<dbReference type="FunCoup" id="Q6AY79">
    <property type="interactions" value="2378"/>
</dbReference>
<dbReference type="STRING" id="10116.ENSRNOP00000047549"/>
<dbReference type="PhosphoSitePlus" id="Q6AY79"/>
<dbReference type="jPOST" id="Q6AY79"/>
<dbReference type="PaxDb" id="10116-ENSRNOP00000047549"/>
<dbReference type="Ensembl" id="ENSRNOT00000040981.3">
    <property type="protein sequence ID" value="ENSRNOP00000047549.2"/>
    <property type="gene ID" value="ENSRNOG00000029238.3"/>
</dbReference>
<dbReference type="GeneID" id="315094"/>
<dbReference type="KEGG" id="rno:315094"/>
<dbReference type="UCSC" id="RGD:1359226">
    <property type="organism name" value="rat"/>
</dbReference>
<dbReference type="AGR" id="RGD:1359226"/>
<dbReference type="CTD" id="51236"/>
<dbReference type="RGD" id="1359226">
    <property type="gene designation" value="Hgh1"/>
</dbReference>
<dbReference type="eggNOG" id="KOG2973">
    <property type="taxonomic scope" value="Eukaryota"/>
</dbReference>
<dbReference type="GeneTree" id="ENSGT00390000016546"/>
<dbReference type="HOGENOM" id="CLU_037769_3_0_1"/>
<dbReference type="InParanoid" id="Q6AY79"/>
<dbReference type="OMA" id="MCILLTN"/>
<dbReference type="OrthoDB" id="86632at9989"/>
<dbReference type="PhylomeDB" id="Q6AY79"/>
<dbReference type="TreeFam" id="TF313296"/>
<dbReference type="PRO" id="PR:Q6AY79"/>
<dbReference type="Proteomes" id="UP000002494">
    <property type="component" value="Chromosome 7"/>
</dbReference>
<dbReference type="Bgee" id="ENSRNOG00000029238">
    <property type="expression patterns" value="Expressed in testis and 20 other cell types or tissues"/>
</dbReference>
<dbReference type="Gene3D" id="1.25.10.10">
    <property type="entry name" value="Leucine-rich Repeat Variant"/>
    <property type="match status" value="1"/>
</dbReference>
<dbReference type="InterPro" id="IPR011989">
    <property type="entry name" value="ARM-like"/>
</dbReference>
<dbReference type="InterPro" id="IPR016024">
    <property type="entry name" value="ARM-type_fold"/>
</dbReference>
<dbReference type="InterPro" id="IPR039717">
    <property type="entry name" value="Hgh1"/>
</dbReference>
<dbReference type="InterPro" id="IPR007206">
    <property type="entry name" value="Protein_HGH1_C"/>
</dbReference>
<dbReference type="InterPro" id="IPR007205">
    <property type="entry name" value="Protein_HGH1_N"/>
</dbReference>
<dbReference type="PANTHER" id="PTHR13387">
    <property type="entry name" value="PROTEIN HGH1 HOMOLOG"/>
    <property type="match status" value="1"/>
</dbReference>
<dbReference type="PANTHER" id="PTHR13387:SF9">
    <property type="entry name" value="PROTEIN HGH1 HOMOLOG"/>
    <property type="match status" value="1"/>
</dbReference>
<dbReference type="Pfam" id="PF04063">
    <property type="entry name" value="DUF383"/>
    <property type="match status" value="1"/>
</dbReference>
<dbReference type="Pfam" id="PF04064">
    <property type="entry name" value="DUF384"/>
    <property type="match status" value="1"/>
</dbReference>
<dbReference type="SUPFAM" id="SSF48371">
    <property type="entry name" value="ARM repeat"/>
    <property type="match status" value="1"/>
</dbReference>
<protein>
    <recommendedName>
        <fullName>Protein HGH1 homolog</fullName>
    </recommendedName>
</protein>
<organism>
    <name type="scientific">Rattus norvegicus</name>
    <name type="common">Rat</name>
    <dbReference type="NCBI Taxonomy" id="10116"/>
    <lineage>
        <taxon>Eukaryota</taxon>
        <taxon>Metazoa</taxon>
        <taxon>Chordata</taxon>
        <taxon>Craniata</taxon>
        <taxon>Vertebrata</taxon>
        <taxon>Euteleostomi</taxon>
        <taxon>Mammalia</taxon>
        <taxon>Eutheria</taxon>
        <taxon>Euarchontoglires</taxon>
        <taxon>Glires</taxon>
        <taxon>Rodentia</taxon>
        <taxon>Myomorpha</taxon>
        <taxon>Muroidea</taxon>
        <taxon>Muridae</taxon>
        <taxon>Murinae</taxon>
        <taxon>Rattus</taxon>
    </lineage>
</organism>
<proteinExistence type="evidence at transcript level"/>